<comment type="function">
    <text evidence="1">Cell division factor that enhances FtsZ-ring assembly. Directly interacts with FtsZ and promotes bundling of FtsZ protofilaments, with a reduction in FtsZ GTPase activity.</text>
</comment>
<comment type="subunit">
    <text evidence="1">Interacts with FtsZ.</text>
</comment>
<comment type="subcellular location">
    <subcellularLocation>
        <location evidence="1">Cytoplasm</location>
    </subcellularLocation>
    <text evidence="1">Localizes to mid-cell in an FtsZ-dependent manner.</text>
</comment>
<comment type="similarity">
    <text evidence="1">Belongs to the ZapD family.</text>
</comment>
<sequence>MILYEYPFNERIRTLLRLEDLFERFTFFVAQEDAREHHVALTTLFEISEVAGRADLKSDLMKELERQRQTLAPFRGNPGIEQNALEAVLGEIEQTLANLAQMQGKTGQHLIDNEWLASIRSRAVIPGGTCKFDLPSYYAWQQWPAEQRRQDIAKWSMPLLPLRDAAMIVLRLARESGQASKVMAMQGSYQQMLSGRTYQLMQVRVPPELRVIPEASANKYMLWVRFTAQDGDVRPRAVDIDVPFQLTLCNL</sequence>
<reference key="1">
    <citation type="journal article" date="2005" name="BMC Genomics">
        <title>Bacterial genome adaptation to niches: divergence of the potential virulence genes in three Burkholderia species of different survival strategies.</title>
        <authorList>
            <person name="Kim H.S."/>
            <person name="Schell M.A."/>
            <person name="Yu Y."/>
            <person name="Ulrich R.L."/>
            <person name="Sarria S.H."/>
            <person name="Nierman W.C."/>
            <person name="DeShazer D."/>
        </authorList>
    </citation>
    <scope>NUCLEOTIDE SEQUENCE [LARGE SCALE GENOMIC DNA]</scope>
    <source>
        <strain>ATCC 700388 / DSM 13276 / CCUG 48851 / CIP 106301 / E264</strain>
    </source>
</reference>
<proteinExistence type="inferred from homology"/>
<protein>
    <recommendedName>
        <fullName evidence="1">Cell division protein ZapD</fullName>
    </recommendedName>
    <alternativeName>
        <fullName evidence="1">Z ring-associated protein D</fullName>
    </alternativeName>
</protein>
<dbReference type="EMBL" id="CP000086">
    <property type="protein sequence ID" value="ABC39150.1"/>
    <property type="molecule type" value="Genomic_DNA"/>
</dbReference>
<dbReference type="RefSeq" id="WP_009888802.1">
    <property type="nucleotide sequence ID" value="NZ_CP008785.1"/>
</dbReference>
<dbReference type="SMR" id="Q2SZG9"/>
<dbReference type="GeneID" id="45120884"/>
<dbReference type="KEGG" id="bte:BTH_I1132"/>
<dbReference type="HOGENOM" id="CLU_076303_0_1_4"/>
<dbReference type="Proteomes" id="UP000001930">
    <property type="component" value="Chromosome I"/>
</dbReference>
<dbReference type="GO" id="GO:0032153">
    <property type="term" value="C:cell division site"/>
    <property type="evidence" value="ECO:0007669"/>
    <property type="project" value="TreeGrafter"/>
</dbReference>
<dbReference type="GO" id="GO:0005737">
    <property type="term" value="C:cytoplasm"/>
    <property type="evidence" value="ECO:0007669"/>
    <property type="project" value="UniProtKB-SubCell"/>
</dbReference>
<dbReference type="GO" id="GO:0000917">
    <property type="term" value="P:division septum assembly"/>
    <property type="evidence" value="ECO:0007669"/>
    <property type="project" value="UniProtKB-KW"/>
</dbReference>
<dbReference type="GO" id="GO:0043093">
    <property type="term" value="P:FtsZ-dependent cytokinesis"/>
    <property type="evidence" value="ECO:0007669"/>
    <property type="project" value="UniProtKB-UniRule"/>
</dbReference>
<dbReference type="Gene3D" id="1.10.3900.10">
    <property type="entry name" value="YacF-like"/>
    <property type="match status" value="1"/>
</dbReference>
<dbReference type="Gene3D" id="2.60.440.10">
    <property type="entry name" value="YacF-like domains"/>
    <property type="match status" value="1"/>
</dbReference>
<dbReference type="HAMAP" id="MF_01092">
    <property type="entry name" value="ZapD"/>
    <property type="match status" value="1"/>
</dbReference>
<dbReference type="InterPro" id="IPR009777">
    <property type="entry name" value="ZapD"/>
</dbReference>
<dbReference type="InterPro" id="IPR027462">
    <property type="entry name" value="ZapD_C"/>
</dbReference>
<dbReference type="InterPro" id="IPR036268">
    <property type="entry name" value="ZapD_sf"/>
</dbReference>
<dbReference type="NCBIfam" id="NF003656">
    <property type="entry name" value="PRK05287.1-4"/>
    <property type="match status" value="1"/>
</dbReference>
<dbReference type="PANTHER" id="PTHR39455">
    <property type="entry name" value="CELL DIVISION PROTEIN ZAPD"/>
    <property type="match status" value="1"/>
</dbReference>
<dbReference type="PANTHER" id="PTHR39455:SF1">
    <property type="entry name" value="CELL DIVISION PROTEIN ZAPD"/>
    <property type="match status" value="1"/>
</dbReference>
<dbReference type="Pfam" id="PF07072">
    <property type="entry name" value="ZapD"/>
    <property type="match status" value="1"/>
</dbReference>
<dbReference type="SUPFAM" id="SSF160950">
    <property type="entry name" value="YacF-like"/>
    <property type="match status" value="1"/>
</dbReference>
<feature type="chain" id="PRO_1000064901" description="Cell division protein ZapD">
    <location>
        <begin position="1"/>
        <end position="251"/>
    </location>
</feature>
<gene>
    <name evidence="1" type="primary">zapD</name>
    <name type="ordered locus">BTH_I1132</name>
</gene>
<keyword id="KW-0131">Cell cycle</keyword>
<keyword id="KW-0132">Cell division</keyword>
<keyword id="KW-0963">Cytoplasm</keyword>
<keyword id="KW-0717">Septation</keyword>
<name>ZAPD_BURTA</name>
<accession>Q2SZG9</accession>
<evidence type="ECO:0000255" key="1">
    <source>
        <dbReference type="HAMAP-Rule" id="MF_01092"/>
    </source>
</evidence>
<organism>
    <name type="scientific">Burkholderia thailandensis (strain ATCC 700388 / DSM 13276 / CCUG 48851 / CIP 106301 / E264)</name>
    <dbReference type="NCBI Taxonomy" id="271848"/>
    <lineage>
        <taxon>Bacteria</taxon>
        <taxon>Pseudomonadati</taxon>
        <taxon>Pseudomonadota</taxon>
        <taxon>Betaproteobacteria</taxon>
        <taxon>Burkholderiales</taxon>
        <taxon>Burkholderiaceae</taxon>
        <taxon>Burkholderia</taxon>
        <taxon>pseudomallei group</taxon>
    </lineage>
</organism>